<sequence length="2179" mass="247061">MMMMMMMKKMQHQRQHQEDHANEANYARGTRLPISGEGPTSQPNSSKQTVLSWQAAIDAARQAKAAQTMSTSAPPPVGSLSQRKRQQYAKSKKQGNSSNSRPARALFCLSLNNPIRRACISIVEWKPFDIFILLAIFANCVALAIYIPFPEDDSNSTNHNLEKVEYAFLIIFTVETFLKIIAYGLLLHPNAYVRNGWNLLDFVIVIVGLFSVILEQLTKETEGGNHSSGKSGGFDVKALRAFRVLRPLRLVSGVPSLQVVLNSIIKAMVPLLHIALLVLFVIIIYAIIGLELFIGKMHKTCFFADSDIVAEEDPAPCAFSGNGRQCTANGTECRSGWVGPNGGITNFDNFAFAMLTVFQCITMEGWTDVLYWVNDAIGWEWPWVYFVSLIILGSFFVLNLVLGVLSGEFSKEREKAKARGDFQKLREKQQLEEDLKGYLDWITQAEDIDPENEEEGGEEGKRNTSMPTSETESVNTENVSGEGETQGCCGTLWCWWKRRGAAKTGPSGCRRWGQAISKSKLSRRWRRWNRFNRRRCRAAVKSVTFYWLVIVLVFLNTLTISSEHYNQPDWLTQIQDIANKVLLALFTCEMLVKMYSLGLQAYFVSLFNRFDCFVVCGGITETILVELELMSPLGVSVFRCVRLLRIFKVTRHWTSLSNLVASLLNSMKSIASLLLLLFLFIIIFSLLGMQLFGGKFNFDETQTKRSTFDNFPQALLTVFQILTGEDWNAVMYDGIMAYGGPSSSGMIVCIYFIILFICGNYILLNVFLAIAVDNLADAESLNTAQKEEAEEKERKKIARKESLENKKNNKPEVNQIANSDNKVTIDDYQEDAEDKDPYPPCDVPVGEEEEEEEEDEPEVPAGPRPRRISELNMKEKIAPIPEGSAFFILSKTNPIRVGCHKLINHHIFTNLILVFIMLSSAALAAEDPIRSHSFRNTILGYFDYAFTAIFTVEILLKMTTFGAFLHKGAFCRNYFNLLDMLVVGVSLVSFGIQSSAISVVKILRVLRVLRPLRAINRAKGLKHVVQCVFVAIRTIGNIMIVTTLLQFMFACIGVQLFKGKFYRCTDEAKSNPEECRGLFILYKDGDVDSPVVRERIWQNSDFNFDNVLSAMMALFTVSTFEGWPALLYKAIDSNGENVGPVYNYRVEISIFFIIYIIIVAFFMMNIFVGFVIVTFQEQGEKEYKNCELDKNQRQCVEYALKARPLRRYIPKNPYQYKFWYVVNSSPFEYMMFVLIMLNTLCLAMQHYEQSKMFNDAMDILNMVFTGVFTVEMVLKVIAFKPKGYFSDAWNTFDSLIVIGSIIDVALSEADPSESETIPLPTATPGNSEESNRISITFFRLFRVMRLVKLLSRGEGIRTLLWTFIKSFQALPYVALLIAMLFFIYAVIGMQMFGKVAMRDNNQINRNNNFQTFPQAVLLLFRCATGEAWQEIMLACLPGKLCDPDSDYNPGEEYTCGSNFAIVYFISFYMLCAFLIINLFVAVIMDNFDYLTRDWSILGPHHLDEFKRIWSEYDPEAKGRIKHLDVVTLLRRIQPPLGFGKLCPHRVACKRLVAMNMPLNSDGTVMFNATLFALVRTALKIKTEGNLEQANEELRAVIKKIWKKTSMKLLDQVVPPAGDDEVTVGKFYATFLIQDYFRKFKKRKEQGLVGKYPAKNTTIALQAGLRTLHDIGPEIRRAISCDLQDDEPEDSKPEEEDVFKRNGALLGNHVNHVNSDRRDSLQQTNTTHRPLHVQRPSMPPASDTEKPLFPPAGNSGCHNHHNHNSIGKQAPTSTNANLNNANMSKAAHGKPPSIGNLEHVSENGHYSCKHDRELQRRSSIKRTRYYETYIRSESGDEQFPTICREDPEIHGYFRDPRCLGEQEYFSSEECCEDDSSPTWSRQNYNYYNRYPGSSMDFERPRGYHHPQGFLEDDDSPTGYDSRRSPRRRLLPPTPPSHRRSSFNFECLRRQSSQDDVLPSPALPHRAALPLHLMQQQIMAVAGLDSSKAQKYSPSHSTRSWATPPATPPYRDWSPCYTPLIQVDRSESMDQVNGSLPSLHRSSWYTDEPDISYRTFTPASLTVPSSFRNKNSDKQRSADSLVEAVLISEGLGRYARDPKFVSATKHEIADACDLTIDEMESAASTLLNGSVCPRANGDMGPISHRQDYELQDFGPGYSDEEPDPGREEEDLADEMICITTL</sequence>
<feature type="chain" id="PRO_0000053935" description="Voltage-dependent L-type calcium channel subunit alpha-1D">
    <location>
        <begin position="1"/>
        <end position="2179"/>
    </location>
</feature>
<feature type="topological domain" description="Cytoplasmic" evidence="5">
    <location>
        <begin position="1"/>
        <end position="126"/>
    </location>
</feature>
<feature type="transmembrane region" description="Helical; Name=S1 of repeat I" evidence="5">
    <location>
        <begin position="127"/>
        <end position="145"/>
    </location>
</feature>
<feature type="topological domain" description="Extracellular" evidence="5">
    <location>
        <begin position="146"/>
        <end position="163"/>
    </location>
</feature>
<feature type="transmembrane region" description="Helical; Name=S2 of repeat I" evidence="5">
    <location>
        <begin position="164"/>
        <end position="183"/>
    </location>
</feature>
<feature type="topological domain" description="Cytoplasmic" evidence="5">
    <location>
        <begin position="184"/>
        <end position="195"/>
    </location>
</feature>
<feature type="transmembrane region" description="Helical; Name=S3 of repeat I" evidence="5">
    <location>
        <begin position="196"/>
        <end position="214"/>
    </location>
</feature>
<feature type="topological domain" description="Extracellular" evidence="5">
    <location>
        <begin position="215"/>
        <end position="235"/>
    </location>
</feature>
<feature type="transmembrane region" description="Helical; Name=S4 of repeat I" evidence="5">
    <location>
        <begin position="236"/>
        <end position="254"/>
    </location>
</feature>
<feature type="topological domain" description="Cytoplasmic" evidence="5">
    <location>
        <begin position="255"/>
        <end position="273"/>
    </location>
</feature>
<feature type="transmembrane region" description="Helical; Name=S5 of repeat I" evidence="5">
    <location>
        <begin position="274"/>
        <end position="293"/>
    </location>
</feature>
<feature type="topological domain" description="Extracellular" evidence="5">
    <location>
        <begin position="294"/>
        <end position="381"/>
    </location>
</feature>
<feature type="transmembrane region" description="Helical; Name=S6 of repeat I" evidence="5">
    <location>
        <begin position="382"/>
        <end position="406"/>
    </location>
</feature>
<feature type="topological domain" description="Cytoplasmic" evidence="5">
    <location>
        <begin position="407"/>
        <end position="543"/>
    </location>
</feature>
<feature type="transmembrane region" description="Helical; Name=S1 of repeat II" evidence="5">
    <location>
        <begin position="544"/>
        <end position="563"/>
    </location>
</feature>
<feature type="topological domain" description="Extracellular" evidence="5">
    <location>
        <begin position="564"/>
        <end position="578"/>
    </location>
</feature>
<feature type="transmembrane region" description="Helical; Name=S2 of repeat II" evidence="5">
    <location>
        <begin position="579"/>
        <end position="597"/>
    </location>
</feature>
<feature type="topological domain" description="Cytoplasmic" evidence="5">
    <location>
        <begin position="598"/>
        <end position="605"/>
    </location>
</feature>
<feature type="transmembrane region" description="Helical; Name=S3 of repeat II" evidence="5">
    <location>
        <begin position="606"/>
        <end position="624"/>
    </location>
</feature>
<feature type="topological domain" description="Extracellular" evidence="5">
    <location>
        <begin position="625"/>
        <end position="634"/>
    </location>
</feature>
<feature type="transmembrane region" description="Helical; Name=S4 of repeat II" evidence="5">
    <location>
        <begin position="635"/>
        <end position="653"/>
    </location>
</feature>
<feature type="topological domain" description="Cytoplasmic" evidence="5">
    <location>
        <begin position="654"/>
        <end position="672"/>
    </location>
</feature>
<feature type="transmembrane region" description="Helical; Name=S5 of repeat II" evidence="5">
    <location>
        <begin position="673"/>
        <end position="693"/>
    </location>
</feature>
<feature type="topological domain" description="Extracellular" evidence="5">
    <location>
        <begin position="694"/>
        <end position="747"/>
    </location>
</feature>
<feature type="transmembrane region" description="Helical; Name=S6 of repeat II" evidence="5">
    <location>
        <begin position="748"/>
        <end position="772"/>
    </location>
</feature>
<feature type="topological domain" description="Cytoplasmic" evidence="5">
    <location>
        <begin position="773"/>
        <end position="906"/>
    </location>
</feature>
<feature type="transmembrane region" description="Helical; Name=S1 of repeat III" evidence="5">
    <location>
        <begin position="907"/>
        <end position="925"/>
    </location>
</feature>
<feature type="topological domain" description="Extracellular" evidence="5">
    <location>
        <begin position="926"/>
        <end position="941"/>
    </location>
</feature>
<feature type="transmembrane region" description="Helical; Name=S2 of repeat III" evidence="5">
    <location>
        <begin position="942"/>
        <end position="961"/>
    </location>
</feature>
<feature type="topological domain" description="Cytoplasmic" evidence="5">
    <location>
        <begin position="962"/>
        <end position="973"/>
    </location>
</feature>
<feature type="transmembrane region" description="Helical; Name=S3 of repeat III" evidence="5">
    <location>
        <begin position="974"/>
        <end position="992"/>
    </location>
</feature>
<feature type="topological domain" description="Extracellular" evidence="5">
    <location>
        <begin position="993"/>
        <end position="998"/>
    </location>
</feature>
<feature type="transmembrane region" description="Helical; Name=S4 of repeat III" evidence="5">
    <location>
        <begin position="999"/>
        <end position="1018"/>
    </location>
</feature>
<feature type="topological domain" description="Cytoplasmic" evidence="5">
    <location>
        <begin position="1019"/>
        <end position="1037"/>
    </location>
</feature>
<feature type="transmembrane region" description="Helical; Name=S5 of repeat III" evidence="5">
    <location>
        <begin position="1038"/>
        <end position="1057"/>
    </location>
</feature>
<feature type="topological domain" description="Extracellular" evidence="5">
    <location>
        <begin position="1058"/>
        <end position="1147"/>
    </location>
</feature>
<feature type="transmembrane region" description="Helical; Name=S6 of repeat III" evidence="5">
    <location>
        <begin position="1148"/>
        <end position="1168"/>
    </location>
</feature>
<feature type="topological domain" description="Cytoplasmic" evidence="5">
    <location>
        <begin position="1169"/>
        <end position="1225"/>
    </location>
</feature>
<feature type="transmembrane region" description="Helical; Name=S1 of repeat IV" evidence="5">
    <location>
        <begin position="1226"/>
        <end position="1244"/>
    </location>
</feature>
<feature type="topological domain" description="Extracellular" evidence="5">
    <location>
        <begin position="1245"/>
        <end position="1259"/>
    </location>
</feature>
<feature type="transmembrane region" description="Helical; Name=S2 of repeat IV" evidence="5">
    <location>
        <begin position="1260"/>
        <end position="1279"/>
    </location>
</feature>
<feature type="topological domain" description="Cytoplasmic" evidence="5">
    <location>
        <begin position="1280"/>
        <end position="1286"/>
    </location>
</feature>
<feature type="transmembrane region" description="Helical; Name=S3 of repeat IV" evidence="5">
    <location>
        <begin position="1287"/>
        <end position="1308"/>
    </location>
</feature>
<feature type="topological domain" description="Extracellular" evidence="5">
    <location>
        <begin position="1309"/>
        <end position="1333"/>
    </location>
</feature>
<feature type="transmembrane region" description="Helical; Name=S4 of repeat IV" evidence="5">
    <location>
        <begin position="1334"/>
        <end position="1353"/>
    </location>
</feature>
<feature type="topological domain" description="Cytoplasmic" evidence="5">
    <location>
        <begin position="1354"/>
        <end position="1372"/>
    </location>
</feature>
<feature type="transmembrane region" description="Helical; Name=S5 of repeat IV" evidence="5">
    <location>
        <begin position="1373"/>
        <end position="1392"/>
    </location>
</feature>
<feature type="topological domain" description="Extracellular" evidence="5">
    <location>
        <begin position="1393"/>
        <end position="1459"/>
    </location>
</feature>
<feature type="transmembrane region" description="Helical; Name=S6 of repeat IV" evidence="5">
    <location>
        <begin position="1460"/>
        <end position="1484"/>
    </location>
</feature>
<feature type="topological domain" description="Cytoplasmic" evidence="5">
    <location>
        <begin position="1485"/>
        <end position="2179"/>
    </location>
</feature>
<feature type="repeat" description="I">
    <location>
        <begin position="113"/>
        <end position="409"/>
    </location>
</feature>
<feature type="repeat" description="II">
    <location>
        <begin position="529"/>
        <end position="775"/>
    </location>
</feature>
<feature type="repeat" description="III">
    <location>
        <begin position="893"/>
        <end position="1175"/>
    </location>
</feature>
<feature type="repeat" description="IV">
    <location>
        <begin position="1212"/>
        <end position="1487"/>
    </location>
</feature>
<feature type="region of interest" description="Disordered" evidence="6">
    <location>
        <begin position="1"/>
        <end position="21"/>
    </location>
</feature>
<feature type="region of interest" description="Disordered" evidence="6">
    <location>
        <begin position="30"/>
        <end position="49"/>
    </location>
</feature>
<feature type="region of interest" description="Disordered" evidence="6">
    <location>
        <begin position="64"/>
        <end position="100"/>
    </location>
</feature>
<feature type="region of interest" description="Binding to the beta subunit" evidence="1">
    <location>
        <begin position="429"/>
        <end position="446"/>
    </location>
</feature>
<feature type="region of interest" description="Disordered" evidence="6">
    <location>
        <begin position="449"/>
        <end position="480"/>
    </location>
</feature>
<feature type="region of interest" description="Disordered" evidence="6">
    <location>
        <begin position="786"/>
        <end position="870"/>
    </location>
</feature>
<feature type="region of interest" description="Dihydropyridine binding" evidence="1">
    <location>
        <begin position="1095"/>
        <end position="1185"/>
    </location>
</feature>
<feature type="region of interest" description="Dihydropyridine binding" evidence="1">
    <location>
        <begin position="1440"/>
        <end position="1506"/>
    </location>
</feature>
<feature type="region of interest" description="Phenylalkylamine binding" evidence="1">
    <location>
        <begin position="1452"/>
        <end position="1495"/>
    </location>
</feature>
<feature type="region of interest" description="Disordered" evidence="6">
    <location>
        <begin position="1704"/>
        <end position="1789"/>
    </location>
</feature>
<feature type="region of interest" description="Disordered" evidence="6">
    <location>
        <begin position="1896"/>
        <end position="1941"/>
    </location>
</feature>
<feature type="region of interest" description="Disordered" evidence="6">
    <location>
        <begin position="2135"/>
        <end position="2171"/>
    </location>
</feature>
<feature type="coiled-coil region" evidence="5">
    <location>
        <begin position="771"/>
        <end position="810"/>
    </location>
</feature>
<feature type="compositionally biased region" description="Polar residues" evidence="6">
    <location>
        <begin position="38"/>
        <end position="49"/>
    </location>
</feature>
<feature type="compositionally biased region" description="Basic residues" evidence="6">
    <location>
        <begin position="82"/>
        <end position="93"/>
    </location>
</feature>
<feature type="compositionally biased region" description="Polar residues" evidence="6">
    <location>
        <begin position="463"/>
        <end position="479"/>
    </location>
</feature>
<feature type="compositionally biased region" description="Basic and acidic residues" evidence="6">
    <location>
        <begin position="786"/>
        <end position="810"/>
    </location>
</feature>
<feature type="compositionally biased region" description="Polar residues" evidence="6">
    <location>
        <begin position="811"/>
        <end position="822"/>
    </location>
</feature>
<feature type="compositionally biased region" description="Acidic residues" evidence="6">
    <location>
        <begin position="845"/>
        <end position="858"/>
    </location>
</feature>
<feature type="compositionally biased region" description="Polar residues" evidence="6">
    <location>
        <begin position="1764"/>
        <end position="1782"/>
    </location>
</feature>
<feature type="compositionally biased region" description="Acidic residues" evidence="6">
    <location>
        <begin position="2156"/>
        <end position="2171"/>
    </location>
</feature>
<feature type="binding site" evidence="3">
    <location>
        <position position="364"/>
    </location>
    <ligand>
        <name>Ca(2+)</name>
        <dbReference type="ChEBI" id="CHEBI:29108"/>
    </ligand>
</feature>
<feature type="binding site" evidence="3">
    <location>
        <position position="725"/>
    </location>
    <ligand>
        <name>Ca(2+)</name>
        <dbReference type="ChEBI" id="CHEBI:29108"/>
    </ligand>
</feature>
<feature type="binding site" evidence="3">
    <location>
        <position position="1121"/>
    </location>
    <ligand>
        <name>Ca(2+)</name>
        <dbReference type="ChEBI" id="CHEBI:29108"/>
    </ligand>
</feature>
<feature type="splice variant" id="VSP_027090" description="In isoform 3." evidence="13">
    <original>MMMMMMMKKMQHQRQHQEDHAN</original>
    <variation>MNLPTFSSDLILIKSVLSQETDARYKGRVVSAVESTEDFSQAFA</variation>
    <location>
        <begin position="1"/>
        <end position="22"/>
    </location>
</feature>
<feature type="splice variant" id="VSP_027091" description="In isoform 2 and isoform 3." evidence="13">
    <original>WCWWKRRGAAKTGPSGCRRWG</original>
    <variation>C</variation>
    <location>
        <begin position="493"/>
        <end position="513"/>
    </location>
</feature>
<feature type="splice variant" id="VSP_027092" description="In isoform 2 and isoform 3." evidence="13">
    <location>
        <begin position="1311"/>
        <end position="1325"/>
    </location>
</feature>
<feature type="sequence conflict" description="In Ref. 1; CAD26883/CAD26884." evidence="14" ref="1">
    <original>A</original>
    <variation>V</variation>
    <location>
        <position position="445"/>
    </location>
</feature>
<feature type="sequence conflict" description="In Ref. 1; CAD26883/CAD26884." evidence="14" ref="1">
    <original>I</original>
    <variation>T</variation>
    <location>
        <position position="868"/>
    </location>
</feature>
<feature type="sequence conflict" description="In Ref. 1; CAD26883/CAD26884." evidence="14" ref="1">
    <original>E</original>
    <variation>G</variation>
    <location>
        <position position="1871"/>
    </location>
</feature>
<feature type="sequence conflict" description="In Ref. 2; BAC77259." evidence="14" ref="2">
    <original>Y</original>
    <variation>S</variation>
    <location>
        <position position="2043"/>
    </location>
</feature>
<evidence type="ECO:0000250" key="1"/>
<evidence type="ECO:0000250" key="2">
    <source>
        <dbReference type="UniProtKB" id="O73700"/>
    </source>
</evidence>
<evidence type="ECO:0000250" key="3">
    <source>
        <dbReference type="UniProtKB" id="P07293"/>
    </source>
</evidence>
<evidence type="ECO:0000250" key="4">
    <source>
        <dbReference type="UniProtKB" id="Q01668"/>
    </source>
</evidence>
<evidence type="ECO:0000255" key="5"/>
<evidence type="ECO:0000256" key="6">
    <source>
        <dbReference type="SAM" id="MobiDB-lite"/>
    </source>
</evidence>
<evidence type="ECO:0000269" key="7">
    <source>
    </source>
</evidence>
<evidence type="ECO:0000269" key="8">
    <source>
    </source>
</evidence>
<evidence type="ECO:0000269" key="9">
    <source>
    </source>
</evidence>
<evidence type="ECO:0000269" key="10">
    <source>
    </source>
</evidence>
<evidence type="ECO:0000269" key="11">
    <source>
    </source>
</evidence>
<evidence type="ECO:0000269" key="12">
    <source>
    </source>
</evidence>
<evidence type="ECO:0000303" key="13">
    <source>
    </source>
</evidence>
<evidence type="ECO:0000305" key="14"/>
<keyword id="KW-0025">Alternative splicing</keyword>
<keyword id="KW-0106">Calcium</keyword>
<keyword id="KW-0107">Calcium channel</keyword>
<keyword id="KW-0109">Calcium transport</keyword>
<keyword id="KW-0175">Coiled coil</keyword>
<keyword id="KW-1015">Disulfide bond</keyword>
<keyword id="KW-0407">Ion channel</keyword>
<keyword id="KW-0406">Ion transport</keyword>
<keyword id="KW-0472">Membrane</keyword>
<keyword id="KW-0479">Metal-binding</keyword>
<keyword id="KW-0597">Phosphoprotein</keyword>
<keyword id="KW-1185">Reference proteome</keyword>
<keyword id="KW-0677">Repeat</keyword>
<keyword id="KW-0812">Transmembrane</keyword>
<keyword id="KW-1133">Transmembrane helix</keyword>
<keyword id="KW-0813">Transport</keyword>
<keyword id="KW-0851">Voltage-gated channel</keyword>
<proteinExistence type="evidence at protein level"/>
<reference key="1">
    <citation type="journal article" date="2003" name="J. Biol. Chem.">
        <title>Enhanced expression of L-type Cav1.3 calcium channels in murine embryonic hearts from Cav1.2-deficient mice.</title>
        <authorList>
            <person name="Xu M."/>
            <person name="Welling A."/>
            <person name="Paparisto S."/>
            <person name="Hofmann F."/>
            <person name="Klugbauer N."/>
        </authorList>
    </citation>
    <scope>NUCLEOTIDE SEQUENCE [MRNA] (ISOFORMS 2 AND 3)</scope>
    <scope>INDUCTION</scope>
    <scope>DEVELOPMENTAL STAGE</scope>
    <source>
        <strain>C57BL/6J</strain>
        <tissue>Heart</tissue>
    </source>
</reference>
<reference key="2">
    <citation type="submission" date="2002-06" db="EMBL/GenBank/DDBJ databases">
        <title>Cloning of the L-type Ca2+ channel alpha1D-subunit from mouse brain and characterization of its expression in the liver.</title>
        <authorList>
            <person name="Okamoto T."/>
            <person name="Kobayashi T."/>
            <person name="Hino O."/>
        </authorList>
    </citation>
    <scope>NUCLEOTIDE SEQUENCE [MRNA] (ISOFORM 1)</scope>
    <source>
        <strain>BALB/cJ</strain>
        <tissue>Brain</tissue>
    </source>
</reference>
<reference key="3">
    <citation type="journal article" date="2009" name="PLoS Biol.">
        <title>Lineage-specific biology revealed by a finished genome assembly of the mouse.</title>
        <authorList>
            <person name="Church D.M."/>
            <person name="Goodstadt L."/>
            <person name="Hillier L.W."/>
            <person name="Zody M.C."/>
            <person name="Goldstein S."/>
            <person name="She X."/>
            <person name="Bult C.J."/>
            <person name="Agarwala R."/>
            <person name="Cherry J.L."/>
            <person name="DiCuccio M."/>
            <person name="Hlavina W."/>
            <person name="Kapustin Y."/>
            <person name="Meric P."/>
            <person name="Maglott D."/>
            <person name="Birtle Z."/>
            <person name="Marques A.C."/>
            <person name="Graves T."/>
            <person name="Zhou S."/>
            <person name="Teague B."/>
            <person name="Potamousis K."/>
            <person name="Churas C."/>
            <person name="Place M."/>
            <person name="Herschleb J."/>
            <person name="Runnheim R."/>
            <person name="Forrest D."/>
            <person name="Amos-Landgraf J."/>
            <person name="Schwartz D.C."/>
            <person name="Cheng Z."/>
            <person name="Lindblad-Toh K."/>
            <person name="Eichler E.E."/>
            <person name="Ponting C.P."/>
        </authorList>
    </citation>
    <scope>NUCLEOTIDE SEQUENCE [LARGE SCALE GENOMIC DNA]</scope>
    <source>
        <strain>C57BL/6J</strain>
    </source>
</reference>
<reference key="4">
    <citation type="journal article" date="1990" name="J. Biol. Chem.">
        <title>Molecular diversity of L-type calcium channels. Evidence for alternative splicing of the transcripts of three non-allelic genes.</title>
        <authorList>
            <person name="Perez-Reyes E."/>
            <person name="Wei X."/>
            <person name="Castellano A."/>
            <person name="Birnbaumer L."/>
        </authorList>
    </citation>
    <scope>NUCLEOTIDE SEQUENCE [MRNA] OF 1168-1463 (ISOFORMS 2/3)</scope>
    <source>
        <strain>ICR</strain>
        <tissue>Ovary</tissue>
    </source>
</reference>
<reference key="5">
    <citation type="journal article" date="2000" name="Cell">
        <title>Congenital deafness and sinoatrial node dysfunction in mice lacking class D L-type Ca2+ channels.</title>
        <authorList>
            <person name="Platzer J."/>
            <person name="Engel J."/>
            <person name="Schrott-Fischer A."/>
            <person name="Stephan K."/>
            <person name="Bova S."/>
            <person name="Chen H."/>
            <person name="Zheng H."/>
            <person name="Striessnig J."/>
        </authorList>
    </citation>
    <scope>DISRUPTION PHENOTYPE</scope>
</reference>
<reference key="6">
    <citation type="journal article" date="2001" name="J. Clin. Invest.">
        <title>Requirement for the L-type Ca(2+) channel alpha(1D) subunit in postnatal pancreatic beta cell generation.</title>
        <authorList>
            <person name="Namkung Y."/>
            <person name="Skrypnyk N."/>
            <person name="Jeong M.J."/>
            <person name="Lee T."/>
            <person name="Lee M.S."/>
            <person name="Kim H.L."/>
            <person name="Chin H."/>
            <person name="Suh P.G."/>
            <person name="Kim S.S."/>
            <person name="Shin H.S."/>
        </authorList>
    </citation>
    <scope>DISRUPTION PHENOTYPE</scope>
</reference>
<reference key="7">
    <citation type="journal article" date="2003" name="Proc. Natl. Acad. Sci. U.S.A.">
        <title>Functional role of L-type Cav1.3 Ca2+ channels in cardiac pacemaker activity.</title>
        <authorList>
            <person name="Mangoni M.E."/>
            <person name="Couette B."/>
            <person name="Bourinet E."/>
            <person name="Platzer J."/>
            <person name="Reimer D."/>
            <person name="Striessnig J."/>
            <person name="Nargeot J."/>
        </authorList>
    </citation>
    <scope>DISRUPTION PHENOTYPE</scope>
</reference>
<reference key="8">
    <citation type="journal article" date="2005" name="J. Neurosci.">
        <title>Few CaV1.3 channels regulate the exocytosis of a synaptic vesicle at the hair cell ribbon synapse.</title>
        <authorList>
            <person name="Brandt A."/>
            <person name="Khimich D."/>
            <person name="Moser T."/>
        </authorList>
    </citation>
    <scope>FUNCTION</scope>
    <scope>TISSUE SPECIFICITY</scope>
    <scope>TRANSPORTER ACTIVITY</scope>
</reference>
<reference key="9">
    <citation type="journal article" date="2007" name="J. Physiol. (Lond.)">
        <title>Ca2+-binding proteins tune Ca2+-feedback to Cav1.3 channels in mouse auditory hair cells.</title>
        <authorList>
            <person name="Cui G."/>
            <person name="Meyer A.C."/>
            <person name="Calin-Jageman I."/>
            <person name="Neef J."/>
            <person name="Haeseleer F."/>
            <person name="Moser T."/>
            <person name="Lee A."/>
        </authorList>
    </citation>
    <scope>INTERACTION WITH CABP1 AND CABP4</scope>
</reference>
<reference key="10">
    <citation type="journal article" date="2010" name="Cell">
        <title>A tissue-specific atlas of mouse protein phosphorylation and expression.</title>
        <authorList>
            <person name="Huttlin E.L."/>
            <person name="Jedrychowski M.P."/>
            <person name="Elias J.E."/>
            <person name="Goswami T."/>
            <person name="Rad R."/>
            <person name="Beausoleil S.A."/>
            <person name="Villen J."/>
            <person name="Haas W."/>
            <person name="Sowa M.E."/>
            <person name="Gygi S.P."/>
        </authorList>
    </citation>
    <scope>IDENTIFICATION BY MASS SPECTROMETRY [LARGE SCALE ANALYSIS]</scope>
    <source>
        <tissue>Brain</tissue>
        <tissue>Lung</tissue>
    </source>
</reference>
<protein>
    <recommendedName>
        <fullName>Voltage-dependent L-type calcium channel subunit alpha-1D</fullName>
    </recommendedName>
    <alternativeName>
        <fullName>Calcium channel, L type, alpha-1 polypeptide isoform 2</fullName>
    </alternativeName>
    <alternativeName>
        <fullName>Voltage-gated calcium channel subunit alpha Cav1.3</fullName>
    </alternativeName>
</protein>
<accession>Q99246</accession>
<accession>Q7TSD2</accession>
<accession>Q8R2I9</accession>
<accession>Q8R2J0</accession>
<dbReference type="EMBL" id="AJ437291">
    <property type="protein sequence ID" value="CAD26883.1"/>
    <property type="molecule type" value="mRNA"/>
</dbReference>
<dbReference type="EMBL" id="AJ437292">
    <property type="protein sequence ID" value="CAD26884.1"/>
    <property type="molecule type" value="mRNA"/>
</dbReference>
<dbReference type="EMBL" id="AB086123">
    <property type="protein sequence ID" value="BAC77259.1"/>
    <property type="molecule type" value="mRNA"/>
</dbReference>
<dbReference type="EMBL" id="AC119886">
    <property type="status" value="NOT_ANNOTATED_CDS"/>
    <property type="molecule type" value="Genomic_DNA"/>
</dbReference>
<dbReference type="EMBL" id="AC154305">
    <property type="status" value="NOT_ANNOTATED_CDS"/>
    <property type="molecule type" value="Genomic_DNA"/>
</dbReference>
<dbReference type="EMBL" id="AC154669">
    <property type="status" value="NOT_ANNOTATED_CDS"/>
    <property type="molecule type" value="Genomic_DNA"/>
</dbReference>
<dbReference type="EMBL" id="AC154690">
    <property type="status" value="NOT_ANNOTATED_CDS"/>
    <property type="molecule type" value="Genomic_DNA"/>
</dbReference>
<dbReference type="EMBL" id="CT009536">
    <property type="status" value="NOT_ANNOTATED_CDS"/>
    <property type="molecule type" value="Genomic_DNA"/>
</dbReference>
<dbReference type="EMBL" id="M57975">
    <property type="protein sequence ID" value="AAA63292.1"/>
    <property type="molecule type" value="mRNA"/>
</dbReference>
<dbReference type="CCDS" id="CCDS36846.1">
    <molecule id="Q99246-4"/>
</dbReference>
<dbReference type="CCDS" id="CCDS36847.1">
    <molecule id="Q99246-3"/>
</dbReference>
<dbReference type="CCDS" id="CCDS88609.1">
    <molecule id="Q99246-2"/>
</dbReference>
<dbReference type="RefSeq" id="NP_001077085.1">
    <molecule id="Q99246-3"/>
    <property type="nucleotide sequence ID" value="NM_001083616.2"/>
</dbReference>
<dbReference type="RefSeq" id="NP_001289566.1">
    <molecule id="Q99246-2"/>
    <property type="nucleotide sequence ID" value="NM_001302637.1"/>
</dbReference>
<dbReference type="RefSeq" id="NP_083257.2">
    <molecule id="Q99246-4"/>
    <property type="nucleotide sequence ID" value="NM_028981.3"/>
</dbReference>
<dbReference type="SMR" id="Q99246"/>
<dbReference type="BioGRID" id="198433">
    <property type="interactions" value="12"/>
</dbReference>
<dbReference type="CORUM" id="Q99246"/>
<dbReference type="FunCoup" id="Q99246">
    <property type="interactions" value="1173"/>
</dbReference>
<dbReference type="IntAct" id="Q99246">
    <property type="interactions" value="2"/>
</dbReference>
<dbReference type="STRING" id="10090.ENSMUSP00000107869"/>
<dbReference type="BindingDB" id="Q99246"/>
<dbReference type="ChEMBL" id="CHEMBL3988632"/>
<dbReference type="DrugCentral" id="Q99246"/>
<dbReference type="GuidetoPHARMACOLOGY" id="530"/>
<dbReference type="GlyGen" id="Q99246">
    <property type="glycosylation" value="8 sites, 3 N-linked glycans (4 sites)"/>
</dbReference>
<dbReference type="iPTMnet" id="Q99246"/>
<dbReference type="PhosphoSitePlus" id="Q99246"/>
<dbReference type="SwissPalm" id="Q99246"/>
<dbReference type="jPOST" id="Q99246"/>
<dbReference type="PaxDb" id="10090-ENSMUSP00000107869"/>
<dbReference type="ProteomicsDB" id="273881">
    <molecule id="Q99246-2"/>
</dbReference>
<dbReference type="ProteomicsDB" id="273882">
    <molecule id="Q99246-3"/>
</dbReference>
<dbReference type="ProteomicsDB" id="273883">
    <molecule id="Q99246-4"/>
</dbReference>
<dbReference type="ABCD" id="Q99246">
    <property type="antibodies" value="2 sequenced antibodies"/>
</dbReference>
<dbReference type="Antibodypedia" id="4062">
    <property type="antibodies" value="294 antibodies from 32 providers"/>
</dbReference>
<dbReference type="DNASU" id="12289"/>
<dbReference type="Ensembl" id="ENSMUST00000112250.6">
    <molecule id="Q99246-4"/>
    <property type="protein sequence ID" value="ENSMUSP00000107869.4"/>
    <property type="gene ID" value="ENSMUSG00000015968.19"/>
</dbReference>
<dbReference type="Ensembl" id="ENSMUST00000224198.3">
    <molecule id="Q99246-3"/>
    <property type="protein sequence ID" value="ENSMUSP00000153250.3"/>
    <property type="gene ID" value="ENSMUSG00000015968.19"/>
</dbReference>
<dbReference type="Ensembl" id="ENSMUST00000238504.2">
    <molecule id="Q99246-2"/>
    <property type="protein sequence ID" value="ENSMUSP00000158632.2"/>
    <property type="gene ID" value="ENSMUSG00000015968.19"/>
</dbReference>
<dbReference type="GeneID" id="12289"/>
<dbReference type="KEGG" id="mmu:12289"/>
<dbReference type="UCSC" id="uc007suu.2">
    <molecule id="Q99246-3"/>
    <property type="organism name" value="mouse"/>
</dbReference>
<dbReference type="UCSC" id="uc007suw.2">
    <molecule id="Q99246-2"/>
    <property type="organism name" value="mouse"/>
</dbReference>
<dbReference type="UCSC" id="uc007sux.2">
    <molecule id="Q99246-4"/>
    <property type="organism name" value="mouse"/>
</dbReference>
<dbReference type="AGR" id="MGI:88293"/>
<dbReference type="CTD" id="776"/>
<dbReference type="MGI" id="MGI:88293">
    <property type="gene designation" value="Cacna1d"/>
</dbReference>
<dbReference type="VEuPathDB" id="HostDB:ENSMUSG00000015968"/>
<dbReference type="eggNOG" id="KOG2301">
    <property type="taxonomic scope" value="Eukaryota"/>
</dbReference>
<dbReference type="GeneTree" id="ENSGT00940000154839"/>
<dbReference type="HOGENOM" id="CLU_000540_0_1_1"/>
<dbReference type="InParanoid" id="Q99246"/>
<dbReference type="TreeFam" id="TF312805"/>
<dbReference type="Reactome" id="R-MMU-422356">
    <property type="pathway name" value="Regulation of insulin secretion"/>
</dbReference>
<dbReference type="BioGRID-ORCS" id="12289">
    <property type="hits" value="3 hits in 79 CRISPR screens"/>
</dbReference>
<dbReference type="ChiTaRS" id="Cacna1d">
    <property type="organism name" value="mouse"/>
</dbReference>
<dbReference type="PRO" id="PR:Q99246"/>
<dbReference type="Proteomes" id="UP000000589">
    <property type="component" value="Chromosome 14"/>
</dbReference>
<dbReference type="RNAct" id="Q99246">
    <property type="molecule type" value="protein"/>
</dbReference>
<dbReference type="Bgee" id="ENSMUSG00000015968">
    <property type="expression patterns" value="Expressed in pituitary gland and 204 other cell types or tissues"/>
</dbReference>
<dbReference type="ExpressionAtlas" id="Q99246">
    <property type="expression patterns" value="baseline and differential"/>
</dbReference>
<dbReference type="GO" id="GO:0098683">
    <property type="term" value="C:cochlear hair cell ribbon synapse"/>
    <property type="evidence" value="ECO:0000314"/>
    <property type="project" value="SynGO"/>
</dbReference>
<dbReference type="GO" id="GO:0005886">
    <property type="term" value="C:plasma membrane"/>
    <property type="evidence" value="ECO:0000314"/>
    <property type="project" value="BHF-UCL"/>
</dbReference>
<dbReference type="GO" id="GO:0048787">
    <property type="term" value="C:presynaptic active zone membrane"/>
    <property type="evidence" value="ECO:0000314"/>
    <property type="project" value="SynGO"/>
</dbReference>
<dbReference type="GO" id="GO:0005891">
    <property type="term" value="C:voltage-gated calcium channel complex"/>
    <property type="evidence" value="ECO:0000304"/>
    <property type="project" value="MGI"/>
</dbReference>
<dbReference type="GO" id="GO:0030018">
    <property type="term" value="C:Z disc"/>
    <property type="evidence" value="ECO:0000314"/>
    <property type="project" value="BHF-UCL"/>
</dbReference>
<dbReference type="GO" id="GO:0030506">
    <property type="term" value="F:ankyrin binding"/>
    <property type="evidence" value="ECO:0000353"/>
    <property type="project" value="BHF-UCL"/>
</dbReference>
<dbReference type="GO" id="GO:0008331">
    <property type="term" value="F:high voltage-gated calcium channel activity"/>
    <property type="evidence" value="ECO:0000314"/>
    <property type="project" value="MGI"/>
</dbReference>
<dbReference type="GO" id="GO:0046872">
    <property type="term" value="F:metal ion binding"/>
    <property type="evidence" value="ECO:0007669"/>
    <property type="project" value="UniProtKB-KW"/>
</dbReference>
<dbReference type="GO" id="GO:0099635">
    <property type="term" value="F:voltage-gated calcium channel activity involved in positive regulation of presynaptic cytosolic calcium levels"/>
    <property type="evidence" value="ECO:0000304"/>
    <property type="project" value="Reactome"/>
</dbReference>
<dbReference type="GO" id="GO:0099626">
    <property type="term" value="F:voltage-gated calcium channel activity involved in regulation of presynaptic cytosolic calcium levels"/>
    <property type="evidence" value="ECO:0000314"/>
    <property type="project" value="SynGO"/>
</dbReference>
<dbReference type="GO" id="GO:0086059">
    <property type="term" value="F:voltage-gated calcium channel activity involved SA node cell action potential"/>
    <property type="evidence" value="ECO:0000315"/>
    <property type="project" value="MGI"/>
</dbReference>
<dbReference type="GO" id="GO:0007188">
    <property type="term" value="P:adenylate cyclase-modulating G protein-coupled receptor signaling pathway"/>
    <property type="evidence" value="ECO:0000315"/>
    <property type="project" value="MGI"/>
</dbReference>
<dbReference type="GO" id="GO:0070588">
    <property type="term" value="P:calcium ion transmembrane transport"/>
    <property type="evidence" value="ECO:0000315"/>
    <property type="project" value="MGI"/>
</dbReference>
<dbReference type="GO" id="GO:0061337">
    <property type="term" value="P:cardiac conduction"/>
    <property type="evidence" value="ECO:0000250"/>
    <property type="project" value="UniProtKB"/>
</dbReference>
<dbReference type="GO" id="GO:0051649">
    <property type="term" value="P:establishment of localization in cell"/>
    <property type="evidence" value="ECO:0000315"/>
    <property type="project" value="MGI"/>
</dbReference>
<dbReference type="GO" id="GO:0086046">
    <property type="term" value="P:membrane depolarization during SA node cell action potential"/>
    <property type="evidence" value="ECO:0000315"/>
    <property type="project" value="MGI"/>
</dbReference>
<dbReference type="GO" id="GO:0045762">
    <property type="term" value="P:positive regulation of adenylate cyclase activity"/>
    <property type="evidence" value="ECO:0000314"/>
    <property type="project" value="UniProtKB"/>
</dbReference>
<dbReference type="GO" id="GO:0060372">
    <property type="term" value="P:regulation of atrial cardiac muscle cell membrane repolarization"/>
    <property type="evidence" value="ECO:0000315"/>
    <property type="project" value="BHF-UCL"/>
</dbReference>
<dbReference type="GO" id="GO:0086091">
    <property type="term" value="P:regulation of heart rate by cardiac conduction"/>
    <property type="evidence" value="ECO:0000315"/>
    <property type="project" value="MGI"/>
</dbReference>
<dbReference type="GO" id="GO:1901379">
    <property type="term" value="P:regulation of potassium ion transmembrane transport"/>
    <property type="evidence" value="ECO:0000315"/>
    <property type="project" value="BHF-UCL"/>
</dbReference>
<dbReference type="GO" id="GO:0007605">
    <property type="term" value="P:sensory perception of sound"/>
    <property type="evidence" value="ECO:0000315"/>
    <property type="project" value="MGI"/>
</dbReference>
<dbReference type="FunFam" id="1.10.287.70:FF:000007">
    <property type="entry name" value="Voltage-dependent L-type calcium channel subunit alpha"/>
    <property type="match status" value="1"/>
</dbReference>
<dbReference type="FunFam" id="1.10.287.70:FF:000009">
    <property type="entry name" value="Voltage-dependent L-type calcium channel subunit alpha"/>
    <property type="match status" value="1"/>
</dbReference>
<dbReference type="FunFam" id="1.10.287.70:FF:000021">
    <property type="entry name" value="Voltage-dependent L-type calcium channel subunit alpha"/>
    <property type="match status" value="1"/>
</dbReference>
<dbReference type="FunFam" id="1.20.120.350:FF:000001">
    <property type="entry name" value="Voltage-dependent L-type calcium channel subunit alpha"/>
    <property type="match status" value="1"/>
</dbReference>
<dbReference type="FunFam" id="1.20.120.350:FF:000006">
    <property type="entry name" value="Voltage-dependent L-type calcium channel subunit alpha"/>
    <property type="match status" value="1"/>
</dbReference>
<dbReference type="FunFam" id="1.20.120.350:FF:000010">
    <property type="entry name" value="Voltage-dependent L-type calcium channel subunit alpha"/>
    <property type="match status" value="1"/>
</dbReference>
<dbReference type="FunFam" id="1.20.120.350:FF:000027">
    <property type="entry name" value="Voltage-dependent L-type calcium channel subunit alpha"/>
    <property type="match status" value="1"/>
</dbReference>
<dbReference type="FunFam" id="1.10.238.10:FF:000063">
    <property type="entry name" value="Voltage-dependent N-type calcium channel subunit alpha"/>
    <property type="match status" value="1"/>
</dbReference>
<dbReference type="Gene3D" id="1.10.287.70">
    <property type="match status" value="4"/>
</dbReference>
<dbReference type="Gene3D" id="6.10.250.2180">
    <property type="match status" value="1"/>
</dbReference>
<dbReference type="Gene3D" id="6.10.250.2500">
    <property type="match status" value="1"/>
</dbReference>
<dbReference type="Gene3D" id="1.20.120.350">
    <property type="entry name" value="Voltage-gated potassium channels. Chain C"/>
    <property type="match status" value="4"/>
</dbReference>
<dbReference type="InterPro" id="IPR031688">
    <property type="entry name" value="CAC1F_C"/>
</dbReference>
<dbReference type="InterPro" id="IPR031649">
    <property type="entry name" value="GPHH_dom"/>
</dbReference>
<dbReference type="InterPro" id="IPR005821">
    <property type="entry name" value="Ion_trans_dom"/>
</dbReference>
<dbReference type="InterPro" id="IPR005452">
    <property type="entry name" value="LVDCC_a1dsu"/>
</dbReference>
<dbReference type="InterPro" id="IPR014873">
    <property type="entry name" value="VDCC_a1su_IQ"/>
</dbReference>
<dbReference type="InterPro" id="IPR050599">
    <property type="entry name" value="VDCC_alpha-1_subunit"/>
</dbReference>
<dbReference type="InterPro" id="IPR005446">
    <property type="entry name" value="VDCC_L_a1su"/>
</dbReference>
<dbReference type="InterPro" id="IPR002077">
    <property type="entry name" value="VDCCAlpha1"/>
</dbReference>
<dbReference type="InterPro" id="IPR027359">
    <property type="entry name" value="Volt_channel_dom_sf"/>
</dbReference>
<dbReference type="PANTHER" id="PTHR45628">
    <property type="entry name" value="VOLTAGE-DEPENDENT CALCIUM CHANNEL TYPE A SUBUNIT ALPHA-1"/>
    <property type="match status" value="1"/>
</dbReference>
<dbReference type="PANTHER" id="PTHR45628:SF11">
    <property type="entry name" value="VOLTAGE-DEPENDENT L-TYPE CALCIUM CHANNEL SUBUNIT ALPHA-1D"/>
    <property type="match status" value="1"/>
</dbReference>
<dbReference type="Pfam" id="PF08763">
    <property type="entry name" value="Ca_chan_IQ"/>
    <property type="match status" value="1"/>
</dbReference>
<dbReference type="Pfam" id="PF16885">
    <property type="entry name" value="CAC1F_C"/>
    <property type="match status" value="2"/>
</dbReference>
<dbReference type="Pfam" id="PF16905">
    <property type="entry name" value="GPHH"/>
    <property type="match status" value="1"/>
</dbReference>
<dbReference type="Pfam" id="PF00520">
    <property type="entry name" value="Ion_trans"/>
    <property type="match status" value="4"/>
</dbReference>
<dbReference type="PRINTS" id="PR00167">
    <property type="entry name" value="CACHANNEL"/>
</dbReference>
<dbReference type="PRINTS" id="PR01630">
    <property type="entry name" value="LVDCCALPHA1"/>
</dbReference>
<dbReference type="PRINTS" id="PR01636">
    <property type="entry name" value="LVDCCALPHA1D"/>
</dbReference>
<dbReference type="SMART" id="SM01062">
    <property type="entry name" value="Ca_chan_IQ"/>
    <property type="match status" value="1"/>
</dbReference>
<dbReference type="SUPFAM" id="SSF81324">
    <property type="entry name" value="Voltage-gated potassium channels"/>
    <property type="match status" value="4"/>
</dbReference>
<comment type="function">
    <text evidence="11">Voltage-sensitive calcium channels (VSCC) mediate the entry of calcium ions into excitable cells and are also involved in a variety of calcium-dependent processes, including muscle contraction, hormone or neurotransmitter release, gene expression, cell motility, cell division and cell death. The isoform alpha-1D gives rise to L-type calcium currents. Long-lasting (L-type) calcium channels belong to the 'high-voltage activated' (HVA) group. They are blocked by dihydropyridines (DHP), phenylalkylamines, and by benzothiazepines.</text>
</comment>
<comment type="catalytic activity">
    <reaction evidence="11">
        <text>Ca(2+)(in) = Ca(2+)(out)</text>
        <dbReference type="Rhea" id="RHEA:29671"/>
        <dbReference type="ChEBI" id="CHEBI:29108"/>
    </reaction>
</comment>
<comment type="subunit">
    <text evidence="2 4 12">Voltage-dependent calcium channels are multisubunit complexes, consisting of alpha-1, alpha-2, beta and delta subunits in a 1:1:1:1 ratio. The channel activity is directed by the pore-forming and voltage-sensitive alpha-1 subunit. In many cases, this subunit is sufficient to generate voltage-sensitive calcium channel activity. The auxiliary subunits beta and alpha-2/delta linked by a disulfide bridge regulate the channel activity. Interacts (via IQ domain) with CABP1 and CABP4 in a calcium independent manner. Interacts with RIMBP2 (By similarity).</text>
</comment>
<comment type="subcellular location">
    <subcellularLocation>
        <location evidence="4">Membrane</location>
        <topology evidence="5">Multi-pass membrane protein</topology>
    </subcellularLocation>
</comment>
<comment type="alternative products">
    <event type="alternative splicing"/>
    <isoform>
        <id>Q99246-2</id>
        <name>1</name>
        <sequence type="displayed"/>
    </isoform>
    <isoform>
        <id>Q99246-3</id>
        <name>2</name>
        <name>Cav1.3(1a)</name>
        <sequence type="described" ref="VSP_027091 VSP_027092"/>
    </isoform>
    <isoform>
        <id>Q99246-4</id>
        <name>3</name>
        <name>Cav1.3(1b)</name>
        <sequence type="described" ref="VSP_027090 VSP_027091 VSP_027092"/>
    </isoform>
</comment>
<comment type="tissue specificity">
    <text evidence="11">Expressed in the inner hair cells (IHC) of the cochlea.</text>
</comment>
<comment type="developmental stage">
    <text evidence="10">Isoform 2 and isoform 3 are expressed in heart at 12.5 dpc (at protein level). Expressed in the heart at 9.5, 12.5 and 15.5 dpc. Isoform 2 and isoform 3 are expressed in heart at 9.5 and 12.5 dpc.</text>
</comment>
<comment type="induction">
    <text evidence="10">Up-regulated in CACNA1C knockout mice.</text>
</comment>
<comment type="domain">
    <text>Each of the four internal repeats contains five hydrophobic transmembrane segments (S1, S2, S3, S5, S6) and one positively charged transmembrane segment (S4). S4 segments probably represent the voltage-sensor and are characterized by a series of positively charged amino acids at every third position.</text>
</comment>
<comment type="disruption phenotype">
    <text evidence="7 8 9">deafness, bradycardia and diabetic traits.</text>
</comment>
<comment type="similarity">
    <text evidence="14">Belongs to the calcium channel alpha-1 subunit (TC 1.A.1.11) family. CACNA1D subfamily.</text>
</comment>
<name>CAC1D_MOUSE</name>
<organism>
    <name type="scientific">Mus musculus</name>
    <name type="common">Mouse</name>
    <dbReference type="NCBI Taxonomy" id="10090"/>
    <lineage>
        <taxon>Eukaryota</taxon>
        <taxon>Metazoa</taxon>
        <taxon>Chordata</taxon>
        <taxon>Craniata</taxon>
        <taxon>Vertebrata</taxon>
        <taxon>Euteleostomi</taxon>
        <taxon>Mammalia</taxon>
        <taxon>Eutheria</taxon>
        <taxon>Euarchontoglires</taxon>
        <taxon>Glires</taxon>
        <taxon>Rodentia</taxon>
        <taxon>Myomorpha</taxon>
        <taxon>Muroidea</taxon>
        <taxon>Muridae</taxon>
        <taxon>Murinae</taxon>
        <taxon>Mus</taxon>
        <taxon>Mus</taxon>
    </lineage>
</organism>
<gene>
    <name type="primary">Cacna1d</name>
    <name type="synonym">Cach3</name>
    <name type="synonym">Cacn4</name>
    <name type="synonym">Cacnl1a2</name>
    <name type="synonym">Cchl1a2</name>
</gene>